<reference key="1">
    <citation type="submission" date="2006-06" db="EMBL/GenBank/DDBJ databases">
        <title>Complete sequence of chromosome of Mesorhizobium sp. BNC1.</title>
        <authorList>
            <consortium name="US DOE Joint Genome Institute"/>
            <person name="Copeland A."/>
            <person name="Lucas S."/>
            <person name="Lapidus A."/>
            <person name="Barry K."/>
            <person name="Detter J.C."/>
            <person name="Glavina del Rio T."/>
            <person name="Hammon N."/>
            <person name="Israni S."/>
            <person name="Dalin E."/>
            <person name="Tice H."/>
            <person name="Pitluck S."/>
            <person name="Chertkov O."/>
            <person name="Brettin T."/>
            <person name="Bruce D."/>
            <person name="Han C."/>
            <person name="Tapia R."/>
            <person name="Gilna P."/>
            <person name="Schmutz J."/>
            <person name="Larimer F."/>
            <person name="Land M."/>
            <person name="Hauser L."/>
            <person name="Kyrpides N."/>
            <person name="Mikhailova N."/>
            <person name="Richardson P."/>
        </authorList>
    </citation>
    <scope>NUCLEOTIDE SEQUENCE [LARGE SCALE GENOMIC DNA]</scope>
    <source>
        <strain>BNC1</strain>
    </source>
</reference>
<keyword id="KW-0413">Isomerase</keyword>
<keyword id="KW-0460">Magnesium</keyword>
<keyword id="KW-0479">Metal-binding</keyword>
<keyword id="KW-0597">Phosphoprotein</keyword>
<name>GLMM_CHESB</name>
<sequence>MSKQYFGTDGIRGRANRFPMTAEVAMRVGMAAGLSFQNGSHRHRVVLGKDTRLSGYMIENAMVAGFCAAGMDVFLLGPIPTPAVAMLVRSLRADIGVMISASHNPYHDNGIKLFGPDGYKLSDEIENRIEAMLDRDVELALADSESLGRAKRVDGVHDRYIEFAKRTLPRDMSLSGLRVVIDCANGAAYKVAPAALWELGAEVVPIYVDPNGFNVNEECGSTHPMSLAKKVHEVRADIGIALDGDADRVVIVDENGTIIDGDQIMALIAESWHENEKLIGGGIVATVMSNLGLERFLRGRGLELHRTKVGDRYVVEHMREHGLNIGGEQSGHVVLSDFSTSGDGLVTALQVLAHIKRLNKPASEVCRKFEPVPQVLKNVRISGGKPLEAASVKAAIADAQAQLGDTGRLVIRPSGTEPLIRVMAEGDDPELVRKMVDSIVDAIADARTAAA</sequence>
<dbReference type="EC" id="5.4.2.10" evidence="1"/>
<dbReference type="EMBL" id="CP000390">
    <property type="protein sequence ID" value="ABG64538.1"/>
    <property type="status" value="ALT_INIT"/>
    <property type="molecule type" value="Genomic_DNA"/>
</dbReference>
<dbReference type="SMR" id="Q11DI7"/>
<dbReference type="STRING" id="266779.Meso_3166"/>
<dbReference type="KEGG" id="mes:Meso_3166"/>
<dbReference type="eggNOG" id="COG1109">
    <property type="taxonomic scope" value="Bacteria"/>
</dbReference>
<dbReference type="HOGENOM" id="CLU_016950_7_0_5"/>
<dbReference type="OrthoDB" id="9803322at2"/>
<dbReference type="GO" id="GO:0005829">
    <property type="term" value="C:cytosol"/>
    <property type="evidence" value="ECO:0007669"/>
    <property type="project" value="TreeGrafter"/>
</dbReference>
<dbReference type="GO" id="GO:0000287">
    <property type="term" value="F:magnesium ion binding"/>
    <property type="evidence" value="ECO:0007669"/>
    <property type="project" value="UniProtKB-UniRule"/>
</dbReference>
<dbReference type="GO" id="GO:0008966">
    <property type="term" value="F:phosphoglucosamine mutase activity"/>
    <property type="evidence" value="ECO:0007669"/>
    <property type="project" value="UniProtKB-UniRule"/>
</dbReference>
<dbReference type="GO" id="GO:0004615">
    <property type="term" value="F:phosphomannomutase activity"/>
    <property type="evidence" value="ECO:0007669"/>
    <property type="project" value="TreeGrafter"/>
</dbReference>
<dbReference type="GO" id="GO:0005975">
    <property type="term" value="P:carbohydrate metabolic process"/>
    <property type="evidence" value="ECO:0007669"/>
    <property type="project" value="InterPro"/>
</dbReference>
<dbReference type="GO" id="GO:0009252">
    <property type="term" value="P:peptidoglycan biosynthetic process"/>
    <property type="evidence" value="ECO:0007669"/>
    <property type="project" value="TreeGrafter"/>
</dbReference>
<dbReference type="GO" id="GO:0006048">
    <property type="term" value="P:UDP-N-acetylglucosamine biosynthetic process"/>
    <property type="evidence" value="ECO:0007669"/>
    <property type="project" value="TreeGrafter"/>
</dbReference>
<dbReference type="CDD" id="cd05802">
    <property type="entry name" value="GlmM"/>
    <property type="match status" value="1"/>
</dbReference>
<dbReference type="FunFam" id="3.30.310.50:FF:000001">
    <property type="entry name" value="Phosphoglucosamine mutase"/>
    <property type="match status" value="1"/>
</dbReference>
<dbReference type="FunFam" id="3.40.120.10:FF:000001">
    <property type="entry name" value="Phosphoglucosamine mutase"/>
    <property type="match status" value="1"/>
</dbReference>
<dbReference type="FunFam" id="3.40.120.10:FF:000003">
    <property type="entry name" value="Phosphoglucosamine mutase"/>
    <property type="match status" value="1"/>
</dbReference>
<dbReference type="Gene3D" id="3.40.120.10">
    <property type="entry name" value="Alpha-D-Glucose-1,6-Bisphosphate, subunit A, domain 3"/>
    <property type="match status" value="3"/>
</dbReference>
<dbReference type="Gene3D" id="3.30.310.50">
    <property type="entry name" value="Alpha-D-phosphohexomutase, C-terminal domain"/>
    <property type="match status" value="1"/>
</dbReference>
<dbReference type="HAMAP" id="MF_01554_B">
    <property type="entry name" value="GlmM_B"/>
    <property type="match status" value="1"/>
</dbReference>
<dbReference type="InterPro" id="IPR005844">
    <property type="entry name" value="A-D-PHexomutase_a/b/a-I"/>
</dbReference>
<dbReference type="InterPro" id="IPR016055">
    <property type="entry name" value="A-D-PHexomutase_a/b/a-I/II/III"/>
</dbReference>
<dbReference type="InterPro" id="IPR005845">
    <property type="entry name" value="A-D-PHexomutase_a/b/a-II"/>
</dbReference>
<dbReference type="InterPro" id="IPR005846">
    <property type="entry name" value="A-D-PHexomutase_a/b/a-III"/>
</dbReference>
<dbReference type="InterPro" id="IPR005843">
    <property type="entry name" value="A-D-PHexomutase_C"/>
</dbReference>
<dbReference type="InterPro" id="IPR036900">
    <property type="entry name" value="A-D-PHexomutase_C_sf"/>
</dbReference>
<dbReference type="InterPro" id="IPR016066">
    <property type="entry name" value="A-D-PHexomutase_CS"/>
</dbReference>
<dbReference type="InterPro" id="IPR005841">
    <property type="entry name" value="Alpha-D-phosphohexomutase_SF"/>
</dbReference>
<dbReference type="InterPro" id="IPR006352">
    <property type="entry name" value="GlmM_bact"/>
</dbReference>
<dbReference type="InterPro" id="IPR050060">
    <property type="entry name" value="Phosphoglucosamine_mutase"/>
</dbReference>
<dbReference type="NCBIfam" id="TIGR01455">
    <property type="entry name" value="glmM"/>
    <property type="match status" value="1"/>
</dbReference>
<dbReference type="NCBIfam" id="NF008139">
    <property type="entry name" value="PRK10887.1"/>
    <property type="match status" value="1"/>
</dbReference>
<dbReference type="PANTHER" id="PTHR42946:SF1">
    <property type="entry name" value="PHOSPHOGLUCOMUTASE (ALPHA-D-GLUCOSE-1,6-BISPHOSPHATE-DEPENDENT)"/>
    <property type="match status" value="1"/>
</dbReference>
<dbReference type="PANTHER" id="PTHR42946">
    <property type="entry name" value="PHOSPHOHEXOSE MUTASE"/>
    <property type="match status" value="1"/>
</dbReference>
<dbReference type="Pfam" id="PF02878">
    <property type="entry name" value="PGM_PMM_I"/>
    <property type="match status" value="1"/>
</dbReference>
<dbReference type="Pfam" id="PF02879">
    <property type="entry name" value="PGM_PMM_II"/>
    <property type="match status" value="1"/>
</dbReference>
<dbReference type="Pfam" id="PF02880">
    <property type="entry name" value="PGM_PMM_III"/>
    <property type="match status" value="1"/>
</dbReference>
<dbReference type="Pfam" id="PF00408">
    <property type="entry name" value="PGM_PMM_IV"/>
    <property type="match status" value="1"/>
</dbReference>
<dbReference type="PRINTS" id="PR00509">
    <property type="entry name" value="PGMPMM"/>
</dbReference>
<dbReference type="SUPFAM" id="SSF55957">
    <property type="entry name" value="Phosphoglucomutase, C-terminal domain"/>
    <property type="match status" value="1"/>
</dbReference>
<dbReference type="SUPFAM" id="SSF53738">
    <property type="entry name" value="Phosphoglucomutase, first 3 domains"/>
    <property type="match status" value="3"/>
</dbReference>
<dbReference type="PROSITE" id="PS00710">
    <property type="entry name" value="PGM_PMM"/>
    <property type="match status" value="1"/>
</dbReference>
<comment type="function">
    <text evidence="1">Catalyzes the conversion of glucosamine-6-phosphate to glucosamine-1-phosphate.</text>
</comment>
<comment type="catalytic activity">
    <reaction evidence="1">
        <text>alpha-D-glucosamine 1-phosphate = D-glucosamine 6-phosphate</text>
        <dbReference type="Rhea" id="RHEA:23424"/>
        <dbReference type="ChEBI" id="CHEBI:58516"/>
        <dbReference type="ChEBI" id="CHEBI:58725"/>
        <dbReference type="EC" id="5.4.2.10"/>
    </reaction>
</comment>
<comment type="cofactor">
    <cofactor evidence="1">
        <name>Mg(2+)</name>
        <dbReference type="ChEBI" id="CHEBI:18420"/>
    </cofactor>
    <text evidence="1">Binds 1 Mg(2+) ion per subunit.</text>
</comment>
<comment type="PTM">
    <text evidence="1">Activated by phosphorylation.</text>
</comment>
<comment type="similarity">
    <text evidence="1">Belongs to the phosphohexose mutase family.</text>
</comment>
<comment type="sequence caution" evidence="2">
    <conflict type="erroneous initiation">
        <sequence resource="EMBL-CDS" id="ABG64538"/>
    </conflict>
</comment>
<proteinExistence type="inferred from homology"/>
<protein>
    <recommendedName>
        <fullName evidence="1">Phosphoglucosamine mutase</fullName>
        <ecNumber evidence="1">5.4.2.10</ecNumber>
    </recommendedName>
</protein>
<gene>
    <name evidence="1" type="primary">glmM</name>
    <name type="ordered locus">Meso_3166</name>
</gene>
<evidence type="ECO:0000255" key="1">
    <source>
        <dbReference type="HAMAP-Rule" id="MF_01554"/>
    </source>
</evidence>
<evidence type="ECO:0000305" key="2"/>
<organism>
    <name type="scientific">Chelativorans sp. (strain BNC1)</name>
    <dbReference type="NCBI Taxonomy" id="266779"/>
    <lineage>
        <taxon>Bacteria</taxon>
        <taxon>Pseudomonadati</taxon>
        <taxon>Pseudomonadota</taxon>
        <taxon>Alphaproteobacteria</taxon>
        <taxon>Hyphomicrobiales</taxon>
        <taxon>Phyllobacteriaceae</taxon>
        <taxon>Chelativorans</taxon>
    </lineage>
</organism>
<accession>Q11DI7</accession>
<feature type="chain" id="PRO_0000305652" description="Phosphoglucosamine mutase">
    <location>
        <begin position="1"/>
        <end position="451"/>
    </location>
</feature>
<feature type="active site" description="Phosphoserine intermediate" evidence="1">
    <location>
        <position position="102"/>
    </location>
</feature>
<feature type="binding site" description="via phosphate group" evidence="1">
    <location>
        <position position="102"/>
    </location>
    <ligand>
        <name>Mg(2+)</name>
        <dbReference type="ChEBI" id="CHEBI:18420"/>
    </ligand>
</feature>
<feature type="binding site" evidence="1">
    <location>
        <position position="243"/>
    </location>
    <ligand>
        <name>Mg(2+)</name>
        <dbReference type="ChEBI" id="CHEBI:18420"/>
    </ligand>
</feature>
<feature type="binding site" evidence="1">
    <location>
        <position position="245"/>
    </location>
    <ligand>
        <name>Mg(2+)</name>
        <dbReference type="ChEBI" id="CHEBI:18420"/>
    </ligand>
</feature>
<feature type="binding site" evidence="1">
    <location>
        <position position="247"/>
    </location>
    <ligand>
        <name>Mg(2+)</name>
        <dbReference type="ChEBI" id="CHEBI:18420"/>
    </ligand>
</feature>
<feature type="modified residue" description="Phosphoserine" evidence="1">
    <location>
        <position position="102"/>
    </location>
</feature>